<feature type="chain" id="PRO_0000114829" description="Ubiquitin">
    <location>
        <begin position="1"/>
        <end position="76"/>
    </location>
</feature>
<feature type="chain" id="PRO_0000138772" description="Large ribosomal subunit protein eL40">
    <location>
        <begin position="77"/>
        <end position="128"/>
    </location>
</feature>
<feature type="domain" description="Ubiquitin-like" evidence="2">
    <location>
        <begin position="1"/>
        <end position="76"/>
    </location>
</feature>
<feature type="cross-link" description="Glycyl lysine isopeptide (Lys-Gly) (interchain with G-Cter in ubiquitin)" evidence="1">
    <location>
        <position position="48"/>
    </location>
</feature>
<feature type="cross-link" description="Glycyl lysine isopeptide (Gly-Lys) (interchain with K-? in acceptor proteins)" evidence="2">
    <location>
        <position position="76"/>
    </location>
</feature>
<protein>
    <recommendedName>
        <fullName evidence="3">Ubiquitin-ribosomal protein eL40 fusion protein</fullName>
    </recommendedName>
    <component>
        <recommendedName>
            <fullName>Ubiquitin</fullName>
        </recommendedName>
    </component>
    <component>
        <recommendedName>
            <fullName evidence="3">Large ribosomal subunit protein eL40</fullName>
        </recommendedName>
        <alternativeName>
            <fullName>60S ribosomal protein L40</fullName>
        </alternativeName>
        <alternativeName>
            <fullName>CEP52</fullName>
        </alternativeName>
    </component>
</protein>
<sequence>MQIFVKTLTGKTIALEVESSDTIENVKAKIQDKEGIPPDQQRLIFAGKQLEDGRTLADYNIQKESTLHLVLRLRGGVMEPTLEALAKKYNWEKKVCRRCYARLPVRASNCRKKACGHCSNLRMKKKLR</sequence>
<name>RL40_TRYCR</name>
<organism>
    <name type="scientific">Trypanosoma cruzi</name>
    <dbReference type="NCBI Taxonomy" id="5693"/>
    <lineage>
        <taxon>Eukaryota</taxon>
        <taxon>Discoba</taxon>
        <taxon>Euglenozoa</taxon>
        <taxon>Kinetoplastea</taxon>
        <taxon>Metakinetoplastina</taxon>
        <taxon>Trypanosomatida</taxon>
        <taxon>Trypanosomatidae</taxon>
        <taxon>Trypanosoma</taxon>
        <taxon>Schizotrypanum</taxon>
    </lineage>
</organism>
<accession>P14795</accession>
<accession>P08565</accession>
<gene>
    <name type="primary">FUS1</name>
</gene>
<dbReference type="EMBL" id="X07451">
    <property type="protein sequence ID" value="CAA30333.1"/>
    <property type="molecule type" value="Genomic_DNA"/>
</dbReference>
<dbReference type="EMBL" id="X07452">
    <property type="protein sequence ID" value="CAA30335.1"/>
    <property type="molecule type" value="mRNA"/>
</dbReference>
<dbReference type="SMR" id="P14795"/>
<dbReference type="VEuPathDB" id="TriTrypDB:BCY84_04472"/>
<dbReference type="VEuPathDB" id="TriTrypDB:C3747_16g221"/>
<dbReference type="VEuPathDB" id="TriTrypDB:C4B63_138g31"/>
<dbReference type="VEuPathDB" id="TriTrypDB:ECC02_012811"/>
<dbReference type="VEuPathDB" id="TriTrypDB:TcBrA4_0110010"/>
<dbReference type="VEuPathDB" id="TriTrypDB:TcBrA4_0110090"/>
<dbReference type="VEuPathDB" id="TriTrypDB:TcCL_ESM07171"/>
<dbReference type="VEuPathDB" id="TriTrypDB:TcG_06155"/>
<dbReference type="VEuPathDB" id="TriTrypDB:TcYC6_0037180"/>
<dbReference type="GO" id="GO:0005737">
    <property type="term" value="C:cytoplasm"/>
    <property type="evidence" value="ECO:0007669"/>
    <property type="project" value="UniProtKB-SubCell"/>
</dbReference>
<dbReference type="GO" id="GO:0005634">
    <property type="term" value="C:nucleus"/>
    <property type="evidence" value="ECO:0007669"/>
    <property type="project" value="UniProtKB-SubCell"/>
</dbReference>
<dbReference type="GO" id="GO:1990904">
    <property type="term" value="C:ribonucleoprotein complex"/>
    <property type="evidence" value="ECO:0007669"/>
    <property type="project" value="UniProtKB-KW"/>
</dbReference>
<dbReference type="GO" id="GO:0005840">
    <property type="term" value="C:ribosome"/>
    <property type="evidence" value="ECO:0007669"/>
    <property type="project" value="UniProtKB-KW"/>
</dbReference>
<dbReference type="GO" id="GO:0003735">
    <property type="term" value="F:structural constituent of ribosome"/>
    <property type="evidence" value="ECO:0007669"/>
    <property type="project" value="InterPro"/>
</dbReference>
<dbReference type="GO" id="GO:0006412">
    <property type="term" value="P:translation"/>
    <property type="evidence" value="ECO:0007669"/>
    <property type="project" value="InterPro"/>
</dbReference>
<dbReference type="CDD" id="cd01803">
    <property type="entry name" value="Ubl_ubiquitin"/>
    <property type="match status" value="1"/>
</dbReference>
<dbReference type="FunFam" id="3.10.20.90:FF:000014">
    <property type="entry name" value="Ubiquitin-60S ribosomal L40 fusion"/>
    <property type="match status" value="1"/>
</dbReference>
<dbReference type="FunFam" id="4.10.1060.50:FF:000001">
    <property type="entry name" value="ubiquitin-60S ribosomal protein L40"/>
    <property type="match status" value="1"/>
</dbReference>
<dbReference type="Gene3D" id="4.10.1060.50">
    <property type="match status" value="1"/>
</dbReference>
<dbReference type="Gene3D" id="3.10.20.90">
    <property type="entry name" value="Phosphatidylinositol 3-kinase Catalytic Subunit, Chain A, domain 1"/>
    <property type="match status" value="1"/>
</dbReference>
<dbReference type="InterPro" id="IPR001975">
    <property type="entry name" value="Ribosomal_eL40_dom"/>
</dbReference>
<dbReference type="InterPro" id="IPR038587">
    <property type="entry name" value="Ribosomal_eL40_sf"/>
</dbReference>
<dbReference type="InterPro" id="IPR011332">
    <property type="entry name" value="Ribosomal_zn-bd"/>
</dbReference>
<dbReference type="InterPro" id="IPR000626">
    <property type="entry name" value="Ubiquitin-like_dom"/>
</dbReference>
<dbReference type="InterPro" id="IPR029071">
    <property type="entry name" value="Ubiquitin-like_domsf"/>
</dbReference>
<dbReference type="InterPro" id="IPR019954">
    <property type="entry name" value="Ubiquitin_CS"/>
</dbReference>
<dbReference type="InterPro" id="IPR019956">
    <property type="entry name" value="Ubiquitin_dom"/>
</dbReference>
<dbReference type="InterPro" id="IPR050158">
    <property type="entry name" value="Ubiquitin_ubiquitin-like"/>
</dbReference>
<dbReference type="PANTHER" id="PTHR10666">
    <property type="entry name" value="UBIQUITIN"/>
    <property type="match status" value="1"/>
</dbReference>
<dbReference type="Pfam" id="PF01020">
    <property type="entry name" value="Ribosomal_L40e"/>
    <property type="match status" value="1"/>
</dbReference>
<dbReference type="Pfam" id="PF00240">
    <property type="entry name" value="ubiquitin"/>
    <property type="match status" value="1"/>
</dbReference>
<dbReference type="PRINTS" id="PR00348">
    <property type="entry name" value="UBIQUITIN"/>
</dbReference>
<dbReference type="SMART" id="SM01377">
    <property type="entry name" value="Ribosomal_L40e"/>
    <property type="match status" value="1"/>
</dbReference>
<dbReference type="SMART" id="SM00213">
    <property type="entry name" value="UBQ"/>
    <property type="match status" value="1"/>
</dbReference>
<dbReference type="SUPFAM" id="SSF54236">
    <property type="entry name" value="Ubiquitin-like"/>
    <property type="match status" value="1"/>
</dbReference>
<dbReference type="SUPFAM" id="SSF57829">
    <property type="entry name" value="Zn-binding ribosomal proteins"/>
    <property type="match status" value="1"/>
</dbReference>
<dbReference type="PROSITE" id="PS00299">
    <property type="entry name" value="UBIQUITIN_1"/>
    <property type="match status" value="1"/>
</dbReference>
<dbReference type="PROSITE" id="PS50053">
    <property type="entry name" value="UBIQUITIN_2"/>
    <property type="match status" value="1"/>
</dbReference>
<reference key="1">
    <citation type="journal article" date="1988" name="EMBO J.">
        <title>The genomic organization and transcription of the ubiquitin genes of Trypanosoma cruzi.</title>
        <authorList>
            <person name="Swindle J."/>
            <person name="Ajioka J."/>
            <person name="Eisen H."/>
            <person name="Sanwal B."/>
            <person name="Jacquemot C."/>
            <person name="Browder Z."/>
            <person name="Buck G."/>
        </authorList>
    </citation>
    <scope>NUCLEOTIDE SEQUENCE [GENOMIC DNA / MRNA]</scope>
    <source>
        <strain>CL</strain>
    </source>
</reference>
<reference key="2">
    <citation type="journal article" date="1988" name="J. Biol. Chem.">
        <title>Ubiquitin genes in trypanosomatidae.</title>
        <authorList>
            <person name="Kirchhoff L.V."/>
            <person name="Kim K.S."/>
            <person name="Engman D.M."/>
            <person name="Donelson J.E."/>
        </authorList>
    </citation>
    <scope>NUCLEOTIDE SEQUENCE [MRNA]</scope>
</reference>
<comment type="function">
    <molecule>Ubiquitin</molecule>
    <text evidence="1">Exists either covalently attached to another protein, or free (unanchored). When covalently bound, it is conjugated to target proteins via an isopeptide bond either as a monomer (monoubiquitin), a polymer linked via different Lys residues of the ubiquitin (polyubiquitin chains) or a linear polymer linked via the initiator Met of the ubiquitin (linear polyubiquitin chains). Polyubiquitin chains, when attached to a target protein, have different functions depending on the Lys residue of the ubiquitin that is linked: Lys-48-linked is involved in protein degradation via the proteasome. Linear polymer chains formed via attachment by the initiator Met lead to cell signaling. Ubiquitin is usually conjugated to Lys residues of target proteins, however, in rare cases, conjugation to Cys or Ser residues has been observed. When polyubiquitin is free (unanchored-polyubiquitin), it also has distinct roles, such as in activation of protein kinases, and in signaling (By similarity).</text>
</comment>
<comment type="function">
    <molecule>Large ribosomal subunit protein eL40</molecule>
    <text evidence="1">Component of the 60S subunit of the ribosome.</text>
</comment>
<comment type="subunit">
    <molecule>Large ribosomal subunit protein eL40</molecule>
    <text evidence="1">Part of the 60S ribosomal subunit.</text>
</comment>
<comment type="subcellular location">
    <molecule>Ubiquitin</molecule>
    <subcellularLocation>
        <location evidence="1">Cytoplasm</location>
    </subcellularLocation>
    <subcellularLocation>
        <location evidence="1">Nucleus</location>
    </subcellularLocation>
</comment>
<comment type="subcellular location">
    <molecule>Large ribosomal subunit protein eL40</molecule>
    <subcellularLocation>
        <location evidence="1">Cytoplasm</location>
    </subcellularLocation>
</comment>
<comment type="miscellaneous">
    <text>Ubiquitin is synthesized as a polyubiquitin precursor with 5 or 6 exact head to tail repeats. Some ubiquitin genes contain a single copy of ubiquitin fused to a ribosomal protein.</text>
</comment>
<comment type="similarity">
    <text evidence="3">In the N-terminal section; belongs to the ubiquitin family.</text>
</comment>
<comment type="similarity">
    <text evidence="3">In the C-terminal section; belongs to the eukaryotic ribosomal protein eL40 family.</text>
</comment>
<proteinExistence type="evidence at transcript level"/>
<keyword id="KW-0963">Cytoplasm</keyword>
<keyword id="KW-1017">Isopeptide bond</keyword>
<keyword id="KW-0539">Nucleus</keyword>
<keyword id="KW-0687">Ribonucleoprotein</keyword>
<keyword id="KW-0689">Ribosomal protein</keyword>
<keyword id="KW-0832">Ubl conjugation</keyword>
<evidence type="ECO:0000250" key="1"/>
<evidence type="ECO:0000255" key="2">
    <source>
        <dbReference type="PROSITE-ProRule" id="PRU00214"/>
    </source>
</evidence>
<evidence type="ECO:0000305" key="3"/>